<sequence>MPKYRSFTTTQGRNMSGARSLWRATGMTEKDFTKPIIAVVNSFSQFVPGHIHLQEVGKLICGEIQKSGGVAKEFNTIAIDDGIAMGHSGMLYSLPSRELIADSIEYVVNAHCADAMICISNCDKITPGMLMASLRLNIPSVFISGGPMEAGKIQKNNKTIKIDLVDAIINGGKSHISDDFIKDIEASACPTCGSCSGMFTANSMNCLTEAIGLALPGNGTLLATHIDRKNLFIKSAQIIVKITEDYYKKNNTNVLPRNIANKESFENAMMLDIAMGGSTNTILHLLAAAQEAKVDFKMSNINKLSKKIPHICKVAPSTSLYHVEDVHRAGGVMGILGELNRFNLLHKNTRNILQLNLEETLDEYDIFSTNNPDVINMFQAGPGGIRTTKAYSQNFRWTRLDYDRKNGCIRSCKHAYSQDGGLAILYGNLAKNGCIIKTAGIDAKNYIFSGVAKVYESQEEAASSILNGEIISGDIIVIRYEGPKGGPGMQEMLYPTTYLKSMNLDKTCALITDGRFSGGTSGISIGHISPEAANKGIIALVKNGDIININIPERTIHLNITEKELSHRILQEESKGPLSYKPHSRKRYISSALKAYAFFSTSADQGAVRDYKKISNI</sequence>
<comment type="function">
    <text evidence="1">Functions in the biosynthesis of branched-chain amino acids. Catalyzes the dehydration of (2R,3R)-2,3-dihydroxy-3-methylpentanoate (2,3-dihydroxy-3-methylvalerate) into 2-oxo-3-methylpentanoate (2-oxo-3-methylvalerate) and of (2R)-2,3-dihydroxy-3-methylbutanoate (2,3-dihydroxyisovalerate) into 2-oxo-3-methylbutanoate (2-oxoisovalerate), the penultimate precursor to L-isoleucine and L-valine, respectively.</text>
</comment>
<comment type="catalytic activity">
    <reaction evidence="1">
        <text>(2R)-2,3-dihydroxy-3-methylbutanoate = 3-methyl-2-oxobutanoate + H2O</text>
        <dbReference type="Rhea" id="RHEA:24809"/>
        <dbReference type="ChEBI" id="CHEBI:11851"/>
        <dbReference type="ChEBI" id="CHEBI:15377"/>
        <dbReference type="ChEBI" id="CHEBI:49072"/>
        <dbReference type="EC" id="4.2.1.9"/>
    </reaction>
    <physiologicalReaction direction="left-to-right" evidence="1">
        <dbReference type="Rhea" id="RHEA:24810"/>
    </physiologicalReaction>
</comment>
<comment type="catalytic activity">
    <reaction evidence="1">
        <text>(2R,3R)-2,3-dihydroxy-3-methylpentanoate = (S)-3-methyl-2-oxopentanoate + H2O</text>
        <dbReference type="Rhea" id="RHEA:27694"/>
        <dbReference type="ChEBI" id="CHEBI:15377"/>
        <dbReference type="ChEBI" id="CHEBI:35146"/>
        <dbReference type="ChEBI" id="CHEBI:49258"/>
        <dbReference type="EC" id="4.2.1.9"/>
    </reaction>
    <physiologicalReaction direction="left-to-right" evidence="1">
        <dbReference type="Rhea" id="RHEA:27695"/>
    </physiologicalReaction>
</comment>
<comment type="cofactor">
    <cofactor evidence="1">
        <name>[2Fe-2S] cluster</name>
        <dbReference type="ChEBI" id="CHEBI:190135"/>
    </cofactor>
    <text evidence="1">Binds 1 [2Fe-2S] cluster per subunit. This cluster acts as a Lewis acid cofactor.</text>
</comment>
<comment type="cofactor">
    <cofactor evidence="1">
        <name>Mg(2+)</name>
        <dbReference type="ChEBI" id="CHEBI:18420"/>
    </cofactor>
</comment>
<comment type="pathway">
    <text evidence="1">Amino-acid biosynthesis; L-isoleucine biosynthesis; L-isoleucine from 2-oxobutanoate: step 3/4.</text>
</comment>
<comment type="pathway">
    <text evidence="1">Amino-acid biosynthesis; L-valine biosynthesis; L-valine from pyruvate: step 3/4.</text>
</comment>
<comment type="subunit">
    <text evidence="1">Homodimer.</text>
</comment>
<comment type="similarity">
    <text evidence="1">Belongs to the IlvD/Edd family.</text>
</comment>
<feature type="chain" id="PRO_0000103446" description="Dihydroxy-acid dehydratase">
    <location>
        <begin position="1"/>
        <end position="617"/>
    </location>
</feature>
<feature type="active site" description="Proton acceptor" evidence="1">
    <location>
        <position position="517"/>
    </location>
</feature>
<feature type="binding site" evidence="1">
    <location>
        <position position="81"/>
    </location>
    <ligand>
        <name>Mg(2+)</name>
        <dbReference type="ChEBI" id="CHEBI:18420"/>
    </ligand>
</feature>
<feature type="binding site" evidence="1">
    <location>
        <position position="122"/>
    </location>
    <ligand>
        <name>[2Fe-2S] cluster</name>
        <dbReference type="ChEBI" id="CHEBI:190135"/>
    </ligand>
</feature>
<feature type="binding site" evidence="1">
    <location>
        <position position="123"/>
    </location>
    <ligand>
        <name>Mg(2+)</name>
        <dbReference type="ChEBI" id="CHEBI:18420"/>
    </ligand>
</feature>
<feature type="binding site" description="via carbamate group" evidence="1">
    <location>
        <position position="124"/>
    </location>
    <ligand>
        <name>Mg(2+)</name>
        <dbReference type="ChEBI" id="CHEBI:18420"/>
    </ligand>
</feature>
<feature type="binding site" evidence="1">
    <location>
        <position position="195"/>
    </location>
    <ligand>
        <name>[2Fe-2S] cluster</name>
        <dbReference type="ChEBI" id="CHEBI:190135"/>
    </ligand>
</feature>
<feature type="binding site" evidence="1">
    <location>
        <position position="491"/>
    </location>
    <ligand>
        <name>Mg(2+)</name>
        <dbReference type="ChEBI" id="CHEBI:18420"/>
    </ligand>
</feature>
<feature type="modified residue" description="N6-carboxylysine" evidence="1">
    <location>
        <position position="124"/>
    </location>
</feature>
<keyword id="KW-0001">2Fe-2S</keyword>
<keyword id="KW-0028">Amino-acid biosynthesis</keyword>
<keyword id="KW-0100">Branched-chain amino acid biosynthesis</keyword>
<keyword id="KW-0408">Iron</keyword>
<keyword id="KW-0411">Iron-sulfur</keyword>
<keyword id="KW-0456">Lyase</keyword>
<keyword id="KW-0460">Magnesium</keyword>
<keyword id="KW-0479">Metal-binding</keyword>
<keyword id="KW-1185">Reference proteome</keyword>
<reference key="1">
    <citation type="journal article" date="2000" name="Nature">
        <title>Genome sequence of the endocellular bacterial symbiont of aphids Buchnera sp. APS.</title>
        <authorList>
            <person name="Shigenobu S."/>
            <person name="Watanabe H."/>
            <person name="Hattori M."/>
            <person name="Sakaki Y."/>
            <person name="Ishikawa H."/>
        </authorList>
    </citation>
    <scope>NUCLEOTIDE SEQUENCE [LARGE SCALE GENOMIC DNA]</scope>
    <source>
        <strain>APS</strain>
    </source>
</reference>
<gene>
    <name evidence="1" type="primary">ilvD</name>
    <name type="ordered locus">BU600</name>
</gene>
<accession>P57656</accession>
<proteinExistence type="inferred from homology"/>
<protein>
    <recommendedName>
        <fullName evidence="1">Dihydroxy-acid dehydratase</fullName>
        <shortName evidence="1">DAD</shortName>
        <ecNumber evidence="1">4.2.1.9</ecNumber>
    </recommendedName>
</protein>
<organism>
    <name type="scientific">Buchnera aphidicola subsp. Acyrthosiphon pisum (strain APS)</name>
    <name type="common">Acyrthosiphon pisum symbiotic bacterium</name>
    <dbReference type="NCBI Taxonomy" id="107806"/>
    <lineage>
        <taxon>Bacteria</taxon>
        <taxon>Pseudomonadati</taxon>
        <taxon>Pseudomonadota</taxon>
        <taxon>Gammaproteobacteria</taxon>
        <taxon>Enterobacterales</taxon>
        <taxon>Erwiniaceae</taxon>
        <taxon>Buchnera</taxon>
    </lineage>
</organism>
<evidence type="ECO:0000255" key="1">
    <source>
        <dbReference type="HAMAP-Rule" id="MF_00012"/>
    </source>
</evidence>
<dbReference type="EC" id="4.2.1.9" evidence="1"/>
<dbReference type="EMBL" id="BA000003">
    <property type="protein sequence ID" value="BAB13285.1"/>
    <property type="molecule type" value="Genomic_DNA"/>
</dbReference>
<dbReference type="RefSeq" id="NP_240399.1">
    <property type="nucleotide sequence ID" value="NC_002528.1"/>
</dbReference>
<dbReference type="RefSeq" id="WP_009874548.1">
    <property type="nucleotide sequence ID" value="NZ_AP036055.1"/>
</dbReference>
<dbReference type="SMR" id="P57656"/>
<dbReference type="STRING" id="563178.BUAP5A_592"/>
<dbReference type="EnsemblBacteria" id="BAB13285">
    <property type="protein sequence ID" value="BAB13285"/>
    <property type="gene ID" value="BAB13285"/>
</dbReference>
<dbReference type="KEGG" id="buc:BU600"/>
<dbReference type="PATRIC" id="fig|107806.10.peg.603"/>
<dbReference type="eggNOG" id="COG0129">
    <property type="taxonomic scope" value="Bacteria"/>
</dbReference>
<dbReference type="HOGENOM" id="CLU_014271_4_2_6"/>
<dbReference type="UniPathway" id="UPA00047">
    <property type="reaction ID" value="UER00057"/>
</dbReference>
<dbReference type="UniPathway" id="UPA00049">
    <property type="reaction ID" value="UER00061"/>
</dbReference>
<dbReference type="Proteomes" id="UP000001806">
    <property type="component" value="Chromosome"/>
</dbReference>
<dbReference type="GO" id="GO:0005829">
    <property type="term" value="C:cytosol"/>
    <property type="evidence" value="ECO:0007669"/>
    <property type="project" value="TreeGrafter"/>
</dbReference>
<dbReference type="GO" id="GO:0051537">
    <property type="term" value="F:2 iron, 2 sulfur cluster binding"/>
    <property type="evidence" value="ECO:0007669"/>
    <property type="project" value="UniProtKB-UniRule"/>
</dbReference>
<dbReference type="GO" id="GO:0004160">
    <property type="term" value="F:dihydroxy-acid dehydratase activity"/>
    <property type="evidence" value="ECO:0007669"/>
    <property type="project" value="UniProtKB-UniRule"/>
</dbReference>
<dbReference type="GO" id="GO:0000287">
    <property type="term" value="F:magnesium ion binding"/>
    <property type="evidence" value="ECO:0007669"/>
    <property type="project" value="UniProtKB-UniRule"/>
</dbReference>
<dbReference type="GO" id="GO:0009097">
    <property type="term" value="P:isoleucine biosynthetic process"/>
    <property type="evidence" value="ECO:0007669"/>
    <property type="project" value="UniProtKB-UniRule"/>
</dbReference>
<dbReference type="GO" id="GO:0009099">
    <property type="term" value="P:L-valine biosynthetic process"/>
    <property type="evidence" value="ECO:0007669"/>
    <property type="project" value="UniProtKB-UniRule"/>
</dbReference>
<dbReference type="FunFam" id="3.50.30.80:FF:000001">
    <property type="entry name" value="Dihydroxy-acid dehydratase"/>
    <property type="match status" value="1"/>
</dbReference>
<dbReference type="Gene3D" id="3.50.30.80">
    <property type="entry name" value="IlvD/EDD C-terminal domain-like"/>
    <property type="match status" value="1"/>
</dbReference>
<dbReference type="HAMAP" id="MF_00012">
    <property type="entry name" value="IlvD"/>
    <property type="match status" value="1"/>
</dbReference>
<dbReference type="InterPro" id="IPR042096">
    <property type="entry name" value="Dihydro-acid_dehy_C"/>
</dbReference>
<dbReference type="InterPro" id="IPR004404">
    <property type="entry name" value="DihydroxyA_deHydtase"/>
</dbReference>
<dbReference type="InterPro" id="IPR020558">
    <property type="entry name" value="DiOHA_6PGluconate_deHydtase_CS"/>
</dbReference>
<dbReference type="InterPro" id="IPR056740">
    <property type="entry name" value="ILV_EDD_C"/>
</dbReference>
<dbReference type="InterPro" id="IPR000581">
    <property type="entry name" value="ILV_EDD_N"/>
</dbReference>
<dbReference type="InterPro" id="IPR037237">
    <property type="entry name" value="IlvD/EDD_N"/>
</dbReference>
<dbReference type="NCBIfam" id="TIGR00110">
    <property type="entry name" value="ilvD"/>
    <property type="match status" value="1"/>
</dbReference>
<dbReference type="NCBIfam" id="NF009103">
    <property type="entry name" value="PRK12448.1"/>
    <property type="match status" value="1"/>
</dbReference>
<dbReference type="PANTHER" id="PTHR43661">
    <property type="entry name" value="D-XYLONATE DEHYDRATASE"/>
    <property type="match status" value="1"/>
</dbReference>
<dbReference type="PANTHER" id="PTHR43661:SF3">
    <property type="entry name" value="D-XYLONATE DEHYDRATASE YAGF-RELATED"/>
    <property type="match status" value="1"/>
</dbReference>
<dbReference type="Pfam" id="PF24877">
    <property type="entry name" value="ILV_EDD_C"/>
    <property type="match status" value="1"/>
</dbReference>
<dbReference type="Pfam" id="PF00920">
    <property type="entry name" value="ILVD_EDD_N"/>
    <property type="match status" value="1"/>
</dbReference>
<dbReference type="SUPFAM" id="SSF143975">
    <property type="entry name" value="IlvD/EDD N-terminal domain-like"/>
    <property type="match status" value="1"/>
</dbReference>
<dbReference type="SUPFAM" id="SSF52016">
    <property type="entry name" value="LeuD/IlvD-like"/>
    <property type="match status" value="1"/>
</dbReference>
<dbReference type="PROSITE" id="PS00886">
    <property type="entry name" value="ILVD_EDD_1"/>
    <property type="match status" value="1"/>
</dbReference>
<dbReference type="PROSITE" id="PS00887">
    <property type="entry name" value="ILVD_EDD_2"/>
    <property type="match status" value="1"/>
</dbReference>
<name>ILVD_BUCAI</name>